<dbReference type="EC" id="2.4.1.227" evidence="1"/>
<dbReference type="EMBL" id="CP000266">
    <property type="protein sequence ID" value="ABF02369.1"/>
    <property type="molecule type" value="Genomic_DNA"/>
</dbReference>
<dbReference type="RefSeq" id="WP_000016582.1">
    <property type="nucleotide sequence ID" value="NC_008258.1"/>
</dbReference>
<dbReference type="SMR" id="Q0T8A7"/>
<dbReference type="CAZy" id="GT28">
    <property type="family name" value="Glycosyltransferase Family 28"/>
</dbReference>
<dbReference type="KEGG" id="sfv:SFV_0083"/>
<dbReference type="HOGENOM" id="CLU_037404_2_0_6"/>
<dbReference type="UniPathway" id="UPA00219"/>
<dbReference type="Proteomes" id="UP000000659">
    <property type="component" value="Chromosome"/>
</dbReference>
<dbReference type="GO" id="GO:0005886">
    <property type="term" value="C:plasma membrane"/>
    <property type="evidence" value="ECO:0007669"/>
    <property type="project" value="UniProtKB-SubCell"/>
</dbReference>
<dbReference type="GO" id="GO:0051991">
    <property type="term" value="F:UDP-N-acetyl-D-glucosamine:N-acetylmuramoyl-L-alanyl-D-glutamyl-meso-2,6-diaminopimelyl-D-alanyl-D-alanine-diphosphoundecaprenol 4-beta-N-acetylglucosaminlytransferase activity"/>
    <property type="evidence" value="ECO:0007669"/>
    <property type="project" value="RHEA"/>
</dbReference>
<dbReference type="GO" id="GO:0050511">
    <property type="term" value="F:undecaprenyldiphospho-muramoylpentapeptide beta-N-acetylglucosaminyltransferase activity"/>
    <property type="evidence" value="ECO:0007669"/>
    <property type="project" value="UniProtKB-UniRule"/>
</dbReference>
<dbReference type="GO" id="GO:0005975">
    <property type="term" value="P:carbohydrate metabolic process"/>
    <property type="evidence" value="ECO:0007669"/>
    <property type="project" value="InterPro"/>
</dbReference>
<dbReference type="GO" id="GO:0051301">
    <property type="term" value="P:cell division"/>
    <property type="evidence" value="ECO:0007669"/>
    <property type="project" value="UniProtKB-KW"/>
</dbReference>
<dbReference type="GO" id="GO:0071555">
    <property type="term" value="P:cell wall organization"/>
    <property type="evidence" value="ECO:0007669"/>
    <property type="project" value="UniProtKB-KW"/>
</dbReference>
<dbReference type="GO" id="GO:0030259">
    <property type="term" value="P:lipid glycosylation"/>
    <property type="evidence" value="ECO:0007669"/>
    <property type="project" value="UniProtKB-UniRule"/>
</dbReference>
<dbReference type="GO" id="GO:0009252">
    <property type="term" value="P:peptidoglycan biosynthetic process"/>
    <property type="evidence" value="ECO:0007669"/>
    <property type="project" value="UniProtKB-UniRule"/>
</dbReference>
<dbReference type="GO" id="GO:0008360">
    <property type="term" value="P:regulation of cell shape"/>
    <property type="evidence" value="ECO:0007669"/>
    <property type="project" value="UniProtKB-KW"/>
</dbReference>
<dbReference type="CDD" id="cd03785">
    <property type="entry name" value="GT28_MurG"/>
    <property type="match status" value="1"/>
</dbReference>
<dbReference type="FunFam" id="3.40.50.2000:FF:000016">
    <property type="entry name" value="UDP-N-acetylglucosamine--N-acetylmuramyl-(pentapeptide) pyrophosphoryl-undecaprenol N-acetylglucosamine transferase"/>
    <property type="match status" value="1"/>
</dbReference>
<dbReference type="FunFam" id="3.40.50.2000:FF:000018">
    <property type="entry name" value="UDP-N-acetylglucosamine--N-acetylmuramyl-(pentapeptide) pyrophosphoryl-undecaprenol N-acetylglucosamine transferase"/>
    <property type="match status" value="1"/>
</dbReference>
<dbReference type="Gene3D" id="3.40.50.2000">
    <property type="entry name" value="Glycogen Phosphorylase B"/>
    <property type="match status" value="2"/>
</dbReference>
<dbReference type="HAMAP" id="MF_00033">
    <property type="entry name" value="MurG"/>
    <property type="match status" value="1"/>
</dbReference>
<dbReference type="InterPro" id="IPR006009">
    <property type="entry name" value="GlcNAc_MurG"/>
</dbReference>
<dbReference type="InterPro" id="IPR007235">
    <property type="entry name" value="Glyco_trans_28_C"/>
</dbReference>
<dbReference type="InterPro" id="IPR004276">
    <property type="entry name" value="GlycoTrans_28_N"/>
</dbReference>
<dbReference type="NCBIfam" id="TIGR01133">
    <property type="entry name" value="murG"/>
    <property type="match status" value="1"/>
</dbReference>
<dbReference type="PANTHER" id="PTHR21015:SF22">
    <property type="entry name" value="GLYCOSYLTRANSFERASE"/>
    <property type="match status" value="1"/>
</dbReference>
<dbReference type="PANTHER" id="PTHR21015">
    <property type="entry name" value="UDP-N-ACETYLGLUCOSAMINE--N-ACETYLMURAMYL-(PENTAPEPTIDE) PYROPHOSPHORYL-UNDECAPRENOL N-ACETYLGLUCOSAMINE TRANSFERASE 1"/>
    <property type="match status" value="1"/>
</dbReference>
<dbReference type="Pfam" id="PF04101">
    <property type="entry name" value="Glyco_tran_28_C"/>
    <property type="match status" value="1"/>
</dbReference>
<dbReference type="Pfam" id="PF03033">
    <property type="entry name" value="Glyco_transf_28"/>
    <property type="match status" value="1"/>
</dbReference>
<dbReference type="SUPFAM" id="SSF53756">
    <property type="entry name" value="UDP-Glycosyltransferase/glycogen phosphorylase"/>
    <property type="match status" value="1"/>
</dbReference>
<keyword id="KW-0131">Cell cycle</keyword>
<keyword id="KW-0132">Cell division</keyword>
<keyword id="KW-0997">Cell inner membrane</keyword>
<keyword id="KW-1003">Cell membrane</keyword>
<keyword id="KW-0133">Cell shape</keyword>
<keyword id="KW-0961">Cell wall biogenesis/degradation</keyword>
<keyword id="KW-0328">Glycosyltransferase</keyword>
<keyword id="KW-0472">Membrane</keyword>
<keyword id="KW-0573">Peptidoglycan synthesis</keyword>
<keyword id="KW-0808">Transferase</keyword>
<feature type="chain" id="PRO_1000002694" description="UDP-N-acetylglucosamine--N-acetylmuramyl-(pentapeptide) pyrophosphoryl-undecaprenol N-acetylglucosamine transferase">
    <location>
        <begin position="1"/>
        <end position="355"/>
    </location>
</feature>
<feature type="binding site" evidence="1">
    <location>
        <begin position="15"/>
        <end position="17"/>
    </location>
    <ligand>
        <name>UDP-N-acetyl-alpha-D-glucosamine</name>
        <dbReference type="ChEBI" id="CHEBI:57705"/>
    </ligand>
</feature>
<feature type="binding site" evidence="1">
    <location>
        <position position="127"/>
    </location>
    <ligand>
        <name>UDP-N-acetyl-alpha-D-glucosamine</name>
        <dbReference type="ChEBI" id="CHEBI:57705"/>
    </ligand>
</feature>
<feature type="binding site" evidence="1">
    <location>
        <position position="163"/>
    </location>
    <ligand>
        <name>UDP-N-acetyl-alpha-D-glucosamine</name>
        <dbReference type="ChEBI" id="CHEBI:57705"/>
    </ligand>
</feature>
<feature type="binding site" evidence="1">
    <location>
        <position position="191"/>
    </location>
    <ligand>
        <name>UDP-N-acetyl-alpha-D-glucosamine</name>
        <dbReference type="ChEBI" id="CHEBI:57705"/>
    </ligand>
</feature>
<feature type="binding site" evidence="1">
    <location>
        <position position="244"/>
    </location>
    <ligand>
        <name>UDP-N-acetyl-alpha-D-glucosamine</name>
        <dbReference type="ChEBI" id="CHEBI:57705"/>
    </ligand>
</feature>
<feature type="binding site" evidence="1">
    <location>
        <begin position="263"/>
        <end position="268"/>
    </location>
    <ligand>
        <name>UDP-N-acetyl-alpha-D-glucosamine</name>
        <dbReference type="ChEBI" id="CHEBI:57705"/>
    </ligand>
</feature>
<feature type="binding site" evidence="1">
    <location>
        <position position="288"/>
    </location>
    <ligand>
        <name>UDP-N-acetyl-alpha-D-glucosamine</name>
        <dbReference type="ChEBI" id="CHEBI:57705"/>
    </ligand>
</feature>
<organism>
    <name type="scientific">Shigella flexneri serotype 5b (strain 8401)</name>
    <dbReference type="NCBI Taxonomy" id="373384"/>
    <lineage>
        <taxon>Bacteria</taxon>
        <taxon>Pseudomonadati</taxon>
        <taxon>Pseudomonadota</taxon>
        <taxon>Gammaproteobacteria</taxon>
        <taxon>Enterobacterales</taxon>
        <taxon>Enterobacteriaceae</taxon>
        <taxon>Shigella</taxon>
    </lineage>
</organism>
<gene>
    <name evidence="1" type="primary">murG</name>
    <name type="ordered locus">SFV_0083</name>
</gene>
<name>MURG_SHIF8</name>
<proteinExistence type="inferred from homology"/>
<comment type="function">
    <text evidence="1">Cell wall formation. Catalyzes the transfer of a GlcNAc subunit on undecaprenyl-pyrophosphoryl-MurNAc-pentapeptide (lipid intermediate I) to form undecaprenyl-pyrophosphoryl-MurNAc-(pentapeptide)GlcNAc (lipid intermediate II).</text>
</comment>
<comment type="catalytic activity">
    <reaction evidence="1">
        <text>di-trans,octa-cis-undecaprenyl diphospho-N-acetyl-alpha-D-muramoyl-L-alanyl-D-glutamyl-meso-2,6-diaminopimeloyl-D-alanyl-D-alanine + UDP-N-acetyl-alpha-D-glucosamine = di-trans,octa-cis-undecaprenyl diphospho-[N-acetyl-alpha-D-glucosaminyl-(1-&gt;4)]-N-acetyl-alpha-D-muramoyl-L-alanyl-D-glutamyl-meso-2,6-diaminopimeloyl-D-alanyl-D-alanine + UDP + H(+)</text>
        <dbReference type="Rhea" id="RHEA:31227"/>
        <dbReference type="ChEBI" id="CHEBI:15378"/>
        <dbReference type="ChEBI" id="CHEBI:57705"/>
        <dbReference type="ChEBI" id="CHEBI:58223"/>
        <dbReference type="ChEBI" id="CHEBI:61387"/>
        <dbReference type="ChEBI" id="CHEBI:61388"/>
        <dbReference type="EC" id="2.4.1.227"/>
    </reaction>
</comment>
<comment type="pathway">
    <text evidence="1">Cell wall biogenesis; peptidoglycan biosynthesis.</text>
</comment>
<comment type="subcellular location">
    <subcellularLocation>
        <location evidence="1">Cell inner membrane</location>
        <topology evidence="1">Peripheral membrane protein</topology>
        <orientation evidence="1">Cytoplasmic side</orientation>
    </subcellularLocation>
</comment>
<comment type="similarity">
    <text evidence="1">Belongs to the glycosyltransferase 28 family. MurG subfamily.</text>
</comment>
<sequence length="355" mass="37813">MSGQGKRLMVMAGGTGGHVFPGLAVAHYLMAQGWQVRWLGTADRMEADLVPKHGIEIDFIRISGLRGKGIKALIAAPLRIFNAWRQARAIMKAYKPDVVLGMGGYVSGPGGLAAWSLGIPVVLHEQNGIAGLTNKWLAKIATKVMQAFPGAFPNAEVVGNPVRTDVLALPLPQQRLAGREGPVRVLVVGGSQGARILNQTMPQVAAKLGDSVTIWHQSGKGSQQSVEQAYAEAGQPQHKVTEFIDDMAAAYAWADVVVCRSGALTVSEIAAAGLPALFVPFQHKDRQQYWNALPLEKAGAAKIIEQPQLSVDAVANTLAGWSRETLLTMAERARAASIPDATERVANEVSRAARA</sequence>
<evidence type="ECO:0000255" key="1">
    <source>
        <dbReference type="HAMAP-Rule" id="MF_00033"/>
    </source>
</evidence>
<protein>
    <recommendedName>
        <fullName evidence="1">UDP-N-acetylglucosamine--N-acetylmuramyl-(pentapeptide) pyrophosphoryl-undecaprenol N-acetylglucosamine transferase</fullName>
        <ecNumber evidence="1">2.4.1.227</ecNumber>
    </recommendedName>
    <alternativeName>
        <fullName evidence="1">Undecaprenyl-PP-MurNAc-pentapeptide-UDPGlcNAc GlcNAc transferase</fullName>
    </alternativeName>
</protein>
<accession>Q0T8A7</accession>
<reference key="1">
    <citation type="journal article" date="2006" name="BMC Genomics">
        <title>Complete genome sequence of Shigella flexneri 5b and comparison with Shigella flexneri 2a.</title>
        <authorList>
            <person name="Nie H."/>
            <person name="Yang F."/>
            <person name="Zhang X."/>
            <person name="Yang J."/>
            <person name="Chen L."/>
            <person name="Wang J."/>
            <person name="Xiong Z."/>
            <person name="Peng J."/>
            <person name="Sun L."/>
            <person name="Dong J."/>
            <person name="Xue Y."/>
            <person name="Xu X."/>
            <person name="Chen S."/>
            <person name="Yao Z."/>
            <person name="Shen Y."/>
            <person name="Jin Q."/>
        </authorList>
    </citation>
    <scope>NUCLEOTIDE SEQUENCE [LARGE SCALE GENOMIC DNA]</scope>
    <source>
        <strain>8401</strain>
    </source>
</reference>